<organism>
    <name type="scientific">Dictyostelium discoideum</name>
    <name type="common">Social amoeba</name>
    <dbReference type="NCBI Taxonomy" id="44689"/>
    <lineage>
        <taxon>Eukaryota</taxon>
        <taxon>Amoebozoa</taxon>
        <taxon>Evosea</taxon>
        <taxon>Eumycetozoa</taxon>
        <taxon>Dictyostelia</taxon>
        <taxon>Dictyosteliales</taxon>
        <taxon>Dictyosteliaceae</taxon>
        <taxon>Dictyostelium</taxon>
    </lineage>
</organism>
<accession>Q54DV0</accession>
<evidence type="ECO:0000250" key="1"/>
<evidence type="ECO:0000255" key="2"/>
<evidence type="ECO:0000255" key="3">
    <source>
        <dbReference type="PROSITE-ProRule" id="PRU00146"/>
    </source>
</evidence>
<evidence type="ECO:0000255" key="4">
    <source>
        <dbReference type="PROSITE-ProRule" id="PRU00508"/>
    </source>
</evidence>
<evidence type="ECO:0000256" key="5">
    <source>
        <dbReference type="SAM" id="MobiDB-lite"/>
    </source>
</evidence>
<evidence type="ECO:0000305" key="6"/>
<sequence length="465" mass="53363">MDNEKVTDTNPKEPSNVESIITTSEVTPSPPPSTTTSTTTNATTTITTSQPQANIIGGKRSRKDDEIISIQEALNDQLEEEKNLLEEAKEQEQEDWGDESICTFDKGYINQSVFACKTCQLSNDKLFGFCYGCSMHCHLYHDVYELFNKRNFRCDCGTKIQEPNNSFKCQLSGILKEDDNNNVNNINNSNNTTTTTTTTTTTTTTTNNNHLNDIDIGSYDKSQILNERNHYNHNFKGKYCYCDSPYDYKEDMIQCIFCEDWFHENCLKLNSNVTDIPSPGEFSDLICADCLSKNQFLLLYPQIRCYIENDHIIIGDNNNNNNNSNNSNSICKVEGGVITPNKKYDLFCKELWKDELCSCLKCKEIYKDKKVEFLFEKDENSLKKKNKTVDENLDNKPVNVFEMGQDVFSKTLPPTQQRALIEGFSDMKEKLKELFSKKLDKNQVITKQDIQSFFVDLNVNKKFKK</sequence>
<name>UBR7_DICDI</name>
<keyword id="KW-0175">Coiled coil</keyword>
<keyword id="KW-0479">Metal-binding</keyword>
<keyword id="KW-1185">Reference proteome</keyword>
<keyword id="KW-0808">Transferase</keyword>
<keyword id="KW-0833">Ubl conjugation pathway</keyword>
<keyword id="KW-0862">Zinc</keyword>
<keyword id="KW-0863">Zinc-finger</keyword>
<protein>
    <recommendedName>
        <fullName>Putative E3 ubiquitin-protein ligase ubr7</fullName>
        <ecNumber>2.3.2.27</ecNumber>
    </recommendedName>
    <alternativeName>
        <fullName>RING-type E3 ubiquitin transferase ubr7</fullName>
    </alternativeName>
</protein>
<feature type="chain" id="PRO_0000371349" description="Putative E3 ubiquitin-protein ligase ubr7">
    <location>
        <begin position="1"/>
        <end position="465"/>
    </location>
</feature>
<feature type="zinc finger region" description="UBR-type" evidence="4">
    <location>
        <begin position="100"/>
        <end position="174"/>
    </location>
</feature>
<feature type="zinc finger region" description="PHD-type" evidence="3">
    <location>
        <begin position="237"/>
        <end position="293"/>
    </location>
</feature>
<feature type="region of interest" description="Disordered" evidence="5">
    <location>
        <begin position="1"/>
        <end position="47"/>
    </location>
</feature>
<feature type="region of interest" description="Disordered" evidence="5">
    <location>
        <begin position="183"/>
        <end position="202"/>
    </location>
</feature>
<feature type="coiled-coil region" evidence="2">
    <location>
        <begin position="65"/>
        <end position="98"/>
    </location>
</feature>
<feature type="compositionally biased region" description="Basic and acidic residues" evidence="5">
    <location>
        <begin position="1"/>
        <end position="11"/>
    </location>
</feature>
<feature type="compositionally biased region" description="Polar residues" evidence="5">
    <location>
        <begin position="12"/>
        <end position="21"/>
    </location>
</feature>
<feature type="compositionally biased region" description="Low complexity" evidence="5">
    <location>
        <begin position="34"/>
        <end position="47"/>
    </location>
</feature>
<comment type="function">
    <text evidence="1">Putative E3 ubiquitin-protein ligase.</text>
</comment>
<comment type="catalytic activity">
    <reaction>
        <text>S-ubiquitinyl-[E2 ubiquitin-conjugating enzyme]-L-cysteine + [acceptor protein]-L-lysine = [E2 ubiquitin-conjugating enzyme]-L-cysteine + N(6)-ubiquitinyl-[acceptor protein]-L-lysine.</text>
        <dbReference type="EC" id="2.3.2.27"/>
    </reaction>
</comment>
<comment type="pathway">
    <text>Protein modification; protein ubiquitination.</text>
</comment>
<comment type="similarity">
    <text evidence="6">Belongs to the UBR7 family.</text>
</comment>
<gene>
    <name type="primary">ubr7</name>
    <name type="ORF">DDB_G0292022</name>
</gene>
<dbReference type="EC" id="2.3.2.27"/>
<dbReference type="EMBL" id="AAFI02000187">
    <property type="protein sequence ID" value="EAL61367.2"/>
    <property type="molecule type" value="Genomic_DNA"/>
</dbReference>
<dbReference type="RefSeq" id="XP_629772.2">
    <property type="nucleotide sequence ID" value="XM_629770.2"/>
</dbReference>
<dbReference type="FunCoup" id="Q54DV0">
    <property type="interactions" value="559"/>
</dbReference>
<dbReference type="STRING" id="44689.Q54DV0"/>
<dbReference type="GlyGen" id="Q54DV0">
    <property type="glycosylation" value="1 site"/>
</dbReference>
<dbReference type="PaxDb" id="44689-DDB0302514"/>
<dbReference type="EnsemblProtists" id="EAL61367">
    <property type="protein sequence ID" value="EAL61367"/>
    <property type="gene ID" value="DDB_G0292022"/>
</dbReference>
<dbReference type="GeneID" id="8628448"/>
<dbReference type="KEGG" id="ddi:DDB_G0292022"/>
<dbReference type="dictyBase" id="DDB_G0292022">
    <property type="gene designation" value="ubr7"/>
</dbReference>
<dbReference type="VEuPathDB" id="AmoebaDB:DDB_G0292022"/>
<dbReference type="eggNOG" id="KOG2752">
    <property type="taxonomic scope" value="Eukaryota"/>
</dbReference>
<dbReference type="HOGENOM" id="CLU_025221_0_0_1"/>
<dbReference type="InParanoid" id="Q54DV0"/>
<dbReference type="OMA" id="GAMVYNH"/>
<dbReference type="PhylomeDB" id="Q54DV0"/>
<dbReference type="UniPathway" id="UPA00143"/>
<dbReference type="PRO" id="PR:Q54DV0"/>
<dbReference type="Proteomes" id="UP000002195">
    <property type="component" value="Chromosome 6"/>
</dbReference>
<dbReference type="GO" id="GO:0061630">
    <property type="term" value="F:ubiquitin protein ligase activity"/>
    <property type="evidence" value="ECO:0007669"/>
    <property type="project" value="InterPro"/>
</dbReference>
<dbReference type="GO" id="GO:0008270">
    <property type="term" value="F:zinc ion binding"/>
    <property type="evidence" value="ECO:0007669"/>
    <property type="project" value="UniProtKB-KW"/>
</dbReference>
<dbReference type="GO" id="GO:0016567">
    <property type="term" value="P:protein ubiquitination"/>
    <property type="evidence" value="ECO:0007669"/>
    <property type="project" value="UniProtKB-UniPathway"/>
</dbReference>
<dbReference type="CDD" id="cd15542">
    <property type="entry name" value="PHD_UBR7"/>
    <property type="match status" value="1"/>
</dbReference>
<dbReference type="CDD" id="cd19677">
    <property type="entry name" value="UBR-box_UBR7"/>
    <property type="match status" value="1"/>
</dbReference>
<dbReference type="Gene3D" id="3.30.40.10">
    <property type="entry name" value="Zinc/RING finger domain, C3HC4 (zinc finger)"/>
    <property type="match status" value="1"/>
</dbReference>
<dbReference type="InterPro" id="IPR040204">
    <property type="entry name" value="UBR7"/>
</dbReference>
<dbReference type="InterPro" id="IPR047506">
    <property type="entry name" value="UBR7-like_UBR-box"/>
</dbReference>
<dbReference type="InterPro" id="IPR019786">
    <property type="entry name" value="Zinc_finger_PHD-type_CS"/>
</dbReference>
<dbReference type="InterPro" id="IPR011011">
    <property type="entry name" value="Znf_FYVE_PHD"/>
</dbReference>
<dbReference type="InterPro" id="IPR001965">
    <property type="entry name" value="Znf_PHD"/>
</dbReference>
<dbReference type="InterPro" id="IPR019787">
    <property type="entry name" value="Znf_PHD-finger"/>
</dbReference>
<dbReference type="InterPro" id="IPR013083">
    <property type="entry name" value="Znf_RING/FYVE/PHD"/>
</dbReference>
<dbReference type="InterPro" id="IPR003126">
    <property type="entry name" value="Znf_UBR"/>
</dbReference>
<dbReference type="PANTHER" id="PTHR13513">
    <property type="entry name" value="E3 UBIQUITIN-PROTEIN LIGASE UBR7"/>
    <property type="match status" value="1"/>
</dbReference>
<dbReference type="PANTHER" id="PTHR13513:SF9">
    <property type="entry name" value="E3 UBIQUITIN-PROTEIN LIGASE UBR7-RELATED"/>
    <property type="match status" value="1"/>
</dbReference>
<dbReference type="Pfam" id="PF00628">
    <property type="entry name" value="PHD"/>
    <property type="match status" value="1"/>
</dbReference>
<dbReference type="Pfam" id="PF02207">
    <property type="entry name" value="zf-UBR"/>
    <property type="match status" value="1"/>
</dbReference>
<dbReference type="SMART" id="SM00249">
    <property type="entry name" value="PHD"/>
    <property type="match status" value="1"/>
</dbReference>
<dbReference type="SMART" id="SM00396">
    <property type="entry name" value="ZnF_UBR1"/>
    <property type="match status" value="1"/>
</dbReference>
<dbReference type="SUPFAM" id="SSF57903">
    <property type="entry name" value="FYVE/PHD zinc finger"/>
    <property type="match status" value="1"/>
</dbReference>
<dbReference type="PROSITE" id="PS01359">
    <property type="entry name" value="ZF_PHD_1"/>
    <property type="match status" value="1"/>
</dbReference>
<dbReference type="PROSITE" id="PS50016">
    <property type="entry name" value="ZF_PHD_2"/>
    <property type="match status" value="1"/>
</dbReference>
<dbReference type="PROSITE" id="PS51157">
    <property type="entry name" value="ZF_UBR"/>
    <property type="match status" value="1"/>
</dbReference>
<proteinExistence type="inferred from homology"/>
<reference key="1">
    <citation type="journal article" date="2005" name="Nature">
        <title>The genome of the social amoeba Dictyostelium discoideum.</title>
        <authorList>
            <person name="Eichinger L."/>
            <person name="Pachebat J.A."/>
            <person name="Gloeckner G."/>
            <person name="Rajandream M.A."/>
            <person name="Sucgang R."/>
            <person name="Berriman M."/>
            <person name="Song J."/>
            <person name="Olsen R."/>
            <person name="Szafranski K."/>
            <person name="Xu Q."/>
            <person name="Tunggal B."/>
            <person name="Kummerfeld S."/>
            <person name="Madera M."/>
            <person name="Konfortov B.A."/>
            <person name="Rivero F."/>
            <person name="Bankier A.T."/>
            <person name="Lehmann R."/>
            <person name="Hamlin N."/>
            <person name="Davies R."/>
            <person name="Gaudet P."/>
            <person name="Fey P."/>
            <person name="Pilcher K."/>
            <person name="Chen G."/>
            <person name="Saunders D."/>
            <person name="Sodergren E.J."/>
            <person name="Davis P."/>
            <person name="Kerhornou A."/>
            <person name="Nie X."/>
            <person name="Hall N."/>
            <person name="Anjard C."/>
            <person name="Hemphill L."/>
            <person name="Bason N."/>
            <person name="Farbrother P."/>
            <person name="Desany B."/>
            <person name="Just E."/>
            <person name="Morio T."/>
            <person name="Rost R."/>
            <person name="Churcher C.M."/>
            <person name="Cooper J."/>
            <person name="Haydock S."/>
            <person name="van Driessche N."/>
            <person name="Cronin A."/>
            <person name="Goodhead I."/>
            <person name="Muzny D.M."/>
            <person name="Mourier T."/>
            <person name="Pain A."/>
            <person name="Lu M."/>
            <person name="Harper D."/>
            <person name="Lindsay R."/>
            <person name="Hauser H."/>
            <person name="James K.D."/>
            <person name="Quiles M."/>
            <person name="Madan Babu M."/>
            <person name="Saito T."/>
            <person name="Buchrieser C."/>
            <person name="Wardroper A."/>
            <person name="Felder M."/>
            <person name="Thangavelu M."/>
            <person name="Johnson D."/>
            <person name="Knights A."/>
            <person name="Loulseged H."/>
            <person name="Mungall K.L."/>
            <person name="Oliver K."/>
            <person name="Price C."/>
            <person name="Quail M.A."/>
            <person name="Urushihara H."/>
            <person name="Hernandez J."/>
            <person name="Rabbinowitsch E."/>
            <person name="Steffen D."/>
            <person name="Sanders M."/>
            <person name="Ma J."/>
            <person name="Kohara Y."/>
            <person name="Sharp S."/>
            <person name="Simmonds M.N."/>
            <person name="Spiegler S."/>
            <person name="Tivey A."/>
            <person name="Sugano S."/>
            <person name="White B."/>
            <person name="Walker D."/>
            <person name="Woodward J.R."/>
            <person name="Winckler T."/>
            <person name="Tanaka Y."/>
            <person name="Shaulsky G."/>
            <person name="Schleicher M."/>
            <person name="Weinstock G.M."/>
            <person name="Rosenthal A."/>
            <person name="Cox E.C."/>
            <person name="Chisholm R.L."/>
            <person name="Gibbs R.A."/>
            <person name="Loomis W.F."/>
            <person name="Platzer M."/>
            <person name="Kay R.R."/>
            <person name="Williams J.G."/>
            <person name="Dear P.H."/>
            <person name="Noegel A.A."/>
            <person name="Barrell B.G."/>
            <person name="Kuspa A."/>
        </authorList>
    </citation>
    <scope>NUCLEOTIDE SEQUENCE [LARGE SCALE GENOMIC DNA]</scope>
    <source>
        <strain>AX4</strain>
    </source>
</reference>